<keyword id="KW-0227">DNA damage</keyword>
<keyword id="KW-0234">DNA repair</keyword>
<keyword id="KW-0539">Nucleus</keyword>
<keyword id="KW-1185">Reference proteome</keyword>
<feature type="chain" id="PRO_0000209128" description="DNA cross-link repair protein SNM1">
    <location>
        <begin position="1"/>
        <end position="484"/>
    </location>
</feature>
<feature type="region of interest" description="Disordered" evidence="2">
    <location>
        <begin position="1"/>
        <end position="27"/>
    </location>
</feature>
<feature type="region of interest" description="Disordered" evidence="2">
    <location>
        <begin position="109"/>
        <end position="141"/>
    </location>
</feature>
<feature type="compositionally biased region" description="Acidic residues" evidence="2">
    <location>
        <begin position="1"/>
        <end position="11"/>
    </location>
</feature>
<feature type="compositionally biased region" description="Polar residues" evidence="2">
    <location>
        <begin position="109"/>
        <end position="127"/>
    </location>
</feature>
<feature type="sequence conflict" description="In Ref. 1; CAA66406." evidence="4" ref="1">
    <original>R</original>
    <variation>P</variation>
    <location>
        <position position="484"/>
    </location>
</feature>
<evidence type="ECO:0000250" key="1"/>
<evidence type="ECO:0000256" key="2">
    <source>
        <dbReference type="SAM" id="MobiDB-lite"/>
    </source>
</evidence>
<evidence type="ECO:0000269" key="3">
    <source>
    </source>
</evidence>
<evidence type="ECO:0000305" key="4"/>
<accession>Q38961</accession>
<accession>Q96280</accession>
<sequence>MDFSDEDDDENCFGSRFNDGVNEEEEDEEGFVFNDDVEENEEEEGFASDFYKAGSDWSCLVEDEETVSSSVKKMKQSNLFQIWGLQENSPDTTKKMKQTDLFQSWGLQKPSPFTSPASNSAKKTTSALGKRRRDSSFSNDSPRPCPFYKKLPGTPFTVDAFRYGCVQGCSAYFLTHFHADHYIGLTKAWSHGPIYCSSLTSRLLRLSLSVNPSSIHPLELDVEYTINGIKVTLIEANHCPGAALIHFRLLDGTCYLHTGDFRASKQMQTHPLLFNQRVHVLYLDTTYCNPRYKFPSKEDVLSYVVRITKDFLRKQPKTLIVVGSYSIGKECVYLAIAKALGVKIFANASRRRILQSFGWDDISKNLSTDGKATCLHVLPMSSLKVERLDEHLKIYREQYGAVLAFRPTGWTYSEKIGEHLDLIKPTSRGKITIYGVPYSEHSSFTELREFVQFLRPDKIIPTVNNGNAGTREKMQSCFREWLRR</sequence>
<protein>
    <recommendedName>
        <fullName>DNA cross-link repair protein SNM1</fullName>
        <shortName>AtSNM1</shortName>
    </recommendedName>
</protein>
<name>SNM1_ARATH</name>
<reference key="1">
    <citation type="journal article" date="1996" name="Nucleic Acids Res.">
        <title>Sequence analysis of an 81 kb contig from Arabidopsis thaliana chromosome III.</title>
        <authorList>
            <person name="Quigley F."/>
            <person name="Dao P."/>
            <person name="Cottet A."/>
            <person name="Mache R."/>
        </authorList>
    </citation>
    <scope>NUCLEOTIDE SEQUENCE [GENOMIC DNA / MRNA]</scope>
    <source>
        <strain>cv. Columbia</strain>
        <tissue>Shoot</tissue>
    </source>
</reference>
<reference key="2">
    <citation type="journal article" date="2000" name="DNA Res.">
        <title>Structural analysis of Arabidopsis thaliana chromosome 3. I. Sequence features of the regions of 4,504,864 bp covered by sixty P1 and TAC clones.</title>
        <authorList>
            <person name="Sato S."/>
            <person name="Nakamura Y."/>
            <person name="Kaneko T."/>
            <person name="Katoh T."/>
            <person name="Asamizu E."/>
            <person name="Tabata S."/>
        </authorList>
    </citation>
    <scope>NUCLEOTIDE SEQUENCE [LARGE SCALE GENOMIC DNA]</scope>
    <source>
        <strain>cv. Columbia</strain>
    </source>
</reference>
<reference key="3">
    <citation type="journal article" date="2017" name="Plant J.">
        <title>Araport11: a complete reannotation of the Arabidopsis thaliana reference genome.</title>
        <authorList>
            <person name="Cheng C.Y."/>
            <person name="Krishnakumar V."/>
            <person name="Chan A.P."/>
            <person name="Thibaud-Nissen F."/>
            <person name="Schobel S."/>
            <person name="Town C.D."/>
        </authorList>
    </citation>
    <scope>GENOME REANNOTATION</scope>
    <source>
        <strain>cv. Columbia</strain>
    </source>
</reference>
<reference key="4">
    <citation type="journal article" date="2002" name="Science">
        <title>Functional annotation of a full-length Arabidopsis cDNA collection.</title>
        <authorList>
            <person name="Seki M."/>
            <person name="Narusaka M."/>
            <person name="Kamiya A."/>
            <person name="Ishida J."/>
            <person name="Satou M."/>
            <person name="Sakurai T."/>
            <person name="Nakajima M."/>
            <person name="Enju A."/>
            <person name="Akiyama K."/>
            <person name="Oono Y."/>
            <person name="Muramatsu M."/>
            <person name="Hayashizaki Y."/>
            <person name="Kawai J."/>
            <person name="Carninci P."/>
            <person name="Itoh M."/>
            <person name="Ishii Y."/>
            <person name="Arakawa T."/>
            <person name="Shibata K."/>
            <person name="Shinagawa A."/>
            <person name="Shinozaki K."/>
        </authorList>
    </citation>
    <scope>NUCLEOTIDE SEQUENCE [LARGE SCALE MRNA]</scope>
    <source>
        <strain>cv. Columbia</strain>
    </source>
</reference>
<reference key="5">
    <citation type="journal article" date="2003" name="Science">
        <title>Empirical analysis of transcriptional activity in the Arabidopsis genome.</title>
        <authorList>
            <person name="Yamada K."/>
            <person name="Lim J."/>
            <person name="Dale J.M."/>
            <person name="Chen H."/>
            <person name="Shinn P."/>
            <person name="Palm C.J."/>
            <person name="Southwick A.M."/>
            <person name="Wu H.C."/>
            <person name="Kim C.J."/>
            <person name="Nguyen M."/>
            <person name="Pham P.K."/>
            <person name="Cheuk R.F."/>
            <person name="Karlin-Newmann G."/>
            <person name="Liu S.X."/>
            <person name="Lam B."/>
            <person name="Sakano H."/>
            <person name="Wu T."/>
            <person name="Yu G."/>
            <person name="Miranda M."/>
            <person name="Quach H.L."/>
            <person name="Tripp M."/>
            <person name="Chang C.H."/>
            <person name="Lee J.M."/>
            <person name="Toriumi M.J."/>
            <person name="Chan M.M."/>
            <person name="Tang C.C."/>
            <person name="Onodera C.S."/>
            <person name="Deng J.M."/>
            <person name="Akiyama K."/>
            <person name="Ansari Y."/>
            <person name="Arakawa T."/>
            <person name="Banh J."/>
            <person name="Banno F."/>
            <person name="Bowser L."/>
            <person name="Brooks S.Y."/>
            <person name="Carninci P."/>
            <person name="Chao Q."/>
            <person name="Choy N."/>
            <person name="Enju A."/>
            <person name="Goldsmith A.D."/>
            <person name="Gurjal M."/>
            <person name="Hansen N.F."/>
            <person name="Hayashizaki Y."/>
            <person name="Johnson-Hopson C."/>
            <person name="Hsuan V.W."/>
            <person name="Iida K."/>
            <person name="Karnes M."/>
            <person name="Khan S."/>
            <person name="Koesema E."/>
            <person name="Ishida J."/>
            <person name="Jiang P.X."/>
            <person name="Jones T."/>
            <person name="Kawai J."/>
            <person name="Kamiya A."/>
            <person name="Meyers C."/>
            <person name="Nakajima M."/>
            <person name="Narusaka M."/>
            <person name="Seki M."/>
            <person name="Sakurai T."/>
            <person name="Satou M."/>
            <person name="Tamse R."/>
            <person name="Vaysberg M."/>
            <person name="Wallender E.K."/>
            <person name="Wong C."/>
            <person name="Yamamura Y."/>
            <person name="Yuan S."/>
            <person name="Shinozaki K."/>
            <person name="Davis R.W."/>
            <person name="Theologis A."/>
            <person name="Ecker J.R."/>
        </authorList>
    </citation>
    <scope>NUCLEOTIDE SEQUENCE [LARGE SCALE MRNA]</scope>
    <source>
        <strain>cv. Columbia</strain>
    </source>
</reference>
<reference key="6">
    <citation type="journal article" date="2004" name="EMBO Rep.">
        <title>SNM-dependent recombinational repair of oxidatively induced DNA damage in Arabidopsis thaliana.</title>
        <authorList>
            <person name="Molinier J."/>
            <person name="Stamm M.-E."/>
            <person name="Hohn B."/>
        </authorList>
    </citation>
    <scope>FUNCTION</scope>
    <scope>INDUCTION</scope>
</reference>
<organism>
    <name type="scientific">Arabidopsis thaliana</name>
    <name type="common">Mouse-ear cress</name>
    <dbReference type="NCBI Taxonomy" id="3702"/>
    <lineage>
        <taxon>Eukaryota</taxon>
        <taxon>Viridiplantae</taxon>
        <taxon>Streptophyta</taxon>
        <taxon>Embryophyta</taxon>
        <taxon>Tracheophyta</taxon>
        <taxon>Spermatophyta</taxon>
        <taxon>Magnoliopsida</taxon>
        <taxon>eudicotyledons</taxon>
        <taxon>Gunneridae</taxon>
        <taxon>Pentapetalae</taxon>
        <taxon>rosids</taxon>
        <taxon>malvids</taxon>
        <taxon>Brassicales</taxon>
        <taxon>Brassicaceae</taxon>
        <taxon>Camelineae</taxon>
        <taxon>Arabidopsis</taxon>
    </lineage>
</organism>
<gene>
    <name type="primary">SNM1</name>
    <name type="ordered locus">At3g26680</name>
    <name type="ORF">MLJ15.8</name>
</gene>
<proteinExistence type="evidence at transcript level"/>
<comment type="function">
    <text evidence="3">May be required for repair of DNA lesions formed after exposure to oxidative stress.</text>
</comment>
<comment type="subcellular location">
    <subcellularLocation>
        <location evidence="1">Nucleus</location>
    </subcellularLocation>
</comment>
<comment type="induction">
    <text evidence="3">Induced by bleomycin, methyl methane sulphonate and hydrogen peroxide, which are known to induce oxidative lesions in DNA. Also induced by bacterial flagellin, which is known to elicit plant defense responses and a rapid oxidative burst, and by xylanase.</text>
</comment>
<comment type="similarity">
    <text evidence="4">Belongs to the DNA repair metallo-beta-lactamase (DRMBL) family.</text>
</comment>
<dbReference type="EMBL" id="X97827">
    <property type="protein sequence ID" value="CAA66406.1"/>
    <property type="molecule type" value="mRNA"/>
</dbReference>
<dbReference type="EMBL" id="X98130">
    <property type="protein sequence ID" value="CAA66817.1"/>
    <property type="molecule type" value="Genomic_DNA"/>
</dbReference>
<dbReference type="EMBL" id="AB026648">
    <property type="protein sequence ID" value="BAB01732.1"/>
    <property type="molecule type" value="Genomic_DNA"/>
</dbReference>
<dbReference type="EMBL" id="CP002686">
    <property type="protein sequence ID" value="AEE77196.1"/>
    <property type="molecule type" value="Genomic_DNA"/>
</dbReference>
<dbReference type="EMBL" id="CP002686">
    <property type="protein sequence ID" value="AEE77197.1"/>
    <property type="molecule type" value="Genomic_DNA"/>
</dbReference>
<dbReference type="EMBL" id="CP002686">
    <property type="protein sequence ID" value="AEE77198.1"/>
    <property type="molecule type" value="Genomic_DNA"/>
</dbReference>
<dbReference type="EMBL" id="AK117422">
    <property type="protein sequence ID" value="BAC42087.1"/>
    <property type="molecule type" value="mRNA"/>
</dbReference>
<dbReference type="EMBL" id="BT005000">
    <property type="protein sequence ID" value="AAO50533.1"/>
    <property type="molecule type" value="mRNA"/>
</dbReference>
<dbReference type="RefSeq" id="NP_001319649.1">
    <property type="nucleotide sequence ID" value="NM_001338816.1"/>
</dbReference>
<dbReference type="RefSeq" id="NP_001319650.1">
    <property type="nucleotide sequence ID" value="NM_001338817.1"/>
</dbReference>
<dbReference type="RefSeq" id="NP_850635.1">
    <property type="nucleotide sequence ID" value="NM_180304.2"/>
</dbReference>
<dbReference type="SMR" id="Q38961"/>
<dbReference type="FunCoup" id="Q38961">
    <property type="interactions" value="2917"/>
</dbReference>
<dbReference type="STRING" id="3702.Q38961"/>
<dbReference type="PaxDb" id="3702-AT3G26680.2"/>
<dbReference type="ProteomicsDB" id="234476"/>
<dbReference type="EnsemblPlants" id="AT3G26680.1">
    <property type="protein sequence ID" value="AT3G26680.1"/>
    <property type="gene ID" value="AT3G26680"/>
</dbReference>
<dbReference type="EnsemblPlants" id="AT3G26680.2">
    <property type="protein sequence ID" value="AT3G26680.2"/>
    <property type="gene ID" value="AT3G26680"/>
</dbReference>
<dbReference type="EnsemblPlants" id="AT3G26680.3">
    <property type="protein sequence ID" value="AT3G26680.3"/>
    <property type="gene ID" value="AT3G26680"/>
</dbReference>
<dbReference type="GeneID" id="822280"/>
<dbReference type="Gramene" id="AT3G26680.1">
    <property type="protein sequence ID" value="AT3G26680.1"/>
    <property type="gene ID" value="AT3G26680"/>
</dbReference>
<dbReference type="Gramene" id="AT3G26680.2">
    <property type="protein sequence ID" value="AT3G26680.2"/>
    <property type="gene ID" value="AT3G26680"/>
</dbReference>
<dbReference type="Gramene" id="AT3G26680.3">
    <property type="protein sequence ID" value="AT3G26680.3"/>
    <property type="gene ID" value="AT3G26680"/>
</dbReference>
<dbReference type="KEGG" id="ath:AT3G26680"/>
<dbReference type="Araport" id="AT3G26680"/>
<dbReference type="TAIR" id="AT3G26680">
    <property type="gene designation" value="SNM1"/>
</dbReference>
<dbReference type="eggNOG" id="KOG1361">
    <property type="taxonomic scope" value="Eukaryota"/>
</dbReference>
<dbReference type="HOGENOM" id="CLU_005260_2_2_1"/>
<dbReference type="InParanoid" id="Q38961"/>
<dbReference type="OMA" id="KSGPIYC"/>
<dbReference type="OrthoDB" id="262529at2759"/>
<dbReference type="PhylomeDB" id="Q38961"/>
<dbReference type="PRO" id="PR:Q38961"/>
<dbReference type="Proteomes" id="UP000006548">
    <property type="component" value="Chromosome 3"/>
</dbReference>
<dbReference type="ExpressionAtlas" id="Q38961">
    <property type="expression patterns" value="baseline and differential"/>
</dbReference>
<dbReference type="GO" id="GO:0005634">
    <property type="term" value="C:nucleus"/>
    <property type="evidence" value="ECO:0007669"/>
    <property type="project" value="UniProtKB-SubCell"/>
</dbReference>
<dbReference type="GO" id="GO:0006281">
    <property type="term" value="P:DNA repair"/>
    <property type="evidence" value="ECO:0000315"/>
    <property type="project" value="TAIR"/>
</dbReference>
<dbReference type="CDD" id="cd16273">
    <property type="entry name" value="SNM1A-1C-like_MBL-fold"/>
    <property type="match status" value="1"/>
</dbReference>
<dbReference type="FunFam" id="3.40.50.12650:FF:000001">
    <property type="entry name" value="DNA cross-link repair 1A"/>
    <property type="match status" value="1"/>
</dbReference>
<dbReference type="FunFam" id="3.60.15.10:FF:000010">
    <property type="entry name" value="DNA cross-link repair 1A"/>
    <property type="match status" value="1"/>
</dbReference>
<dbReference type="Gene3D" id="3.40.50.12650">
    <property type="match status" value="1"/>
</dbReference>
<dbReference type="Gene3D" id="3.60.15.10">
    <property type="entry name" value="Ribonuclease Z/Hydroxyacylglutathione hydrolase-like"/>
    <property type="match status" value="1"/>
</dbReference>
<dbReference type="InterPro" id="IPR011084">
    <property type="entry name" value="DRMBL"/>
</dbReference>
<dbReference type="InterPro" id="IPR036866">
    <property type="entry name" value="RibonucZ/Hydroxyglut_hydro"/>
</dbReference>
<dbReference type="PANTHER" id="PTHR23240">
    <property type="entry name" value="DNA CROSS-LINK REPAIR PROTEIN PSO2/SNM1-RELATED"/>
    <property type="match status" value="1"/>
</dbReference>
<dbReference type="PANTHER" id="PTHR23240:SF36">
    <property type="entry name" value="DNA CROSS-LINK REPAIR PROTEIN SNM1"/>
    <property type="match status" value="1"/>
</dbReference>
<dbReference type="Pfam" id="PF07522">
    <property type="entry name" value="DRMBL"/>
    <property type="match status" value="1"/>
</dbReference>
<dbReference type="SUPFAM" id="SSF56281">
    <property type="entry name" value="Metallo-hydrolase/oxidoreductase"/>
    <property type="match status" value="1"/>
</dbReference>